<dbReference type="EC" id="2.5.1.55" evidence="1"/>
<dbReference type="EMBL" id="CU928164">
    <property type="protein sequence ID" value="CAR17683.1"/>
    <property type="molecule type" value="Genomic_DNA"/>
</dbReference>
<dbReference type="RefSeq" id="WP_000811065.1">
    <property type="nucleotide sequence ID" value="NC_011750.1"/>
</dbReference>
<dbReference type="RefSeq" id="YP_002407551.1">
    <property type="nucleotide sequence ID" value="NC_011750.1"/>
</dbReference>
<dbReference type="SMR" id="B7NUY1"/>
<dbReference type="STRING" id="585057.ECIAI39_1551"/>
<dbReference type="GeneID" id="75203328"/>
<dbReference type="KEGG" id="ect:ECIAI39_1551"/>
<dbReference type="PATRIC" id="fig|585057.6.peg.1621"/>
<dbReference type="HOGENOM" id="CLU_036666_0_0_6"/>
<dbReference type="UniPathway" id="UPA00030"/>
<dbReference type="UniPathway" id="UPA00357">
    <property type="reaction ID" value="UER00474"/>
</dbReference>
<dbReference type="Proteomes" id="UP000000749">
    <property type="component" value="Chromosome"/>
</dbReference>
<dbReference type="GO" id="GO:0005737">
    <property type="term" value="C:cytoplasm"/>
    <property type="evidence" value="ECO:0007669"/>
    <property type="project" value="UniProtKB-SubCell"/>
</dbReference>
<dbReference type="GO" id="GO:0008676">
    <property type="term" value="F:3-deoxy-8-phosphooctulonate synthase activity"/>
    <property type="evidence" value="ECO:0007669"/>
    <property type="project" value="UniProtKB-UniRule"/>
</dbReference>
<dbReference type="GO" id="GO:0019294">
    <property type="term" value="P:keto-3-deoxy-D-manno-octulosonic acid biosynthetic process"/>
    <property type="evidence" value="ECO:0007669"/>
    <property type="project" value="UniProtKB-UniRule"/>
</dbReference>
<dbReference type="FunFam" id="3.20.20.70:FF:000058">
    <property type="entry name" value="2-dehydro-3-deoxyphosphooctonate aldolase"/>
    <property type="match status" value="1"/>
</dbReference>
<dbReference type="Gene3D" id="3.20.20.70">
    <property type="entry name" value="Aldolase class I"/>
    <property type="match status" value="1"/>
</dbReference>
<dbReference type="HAMAP" id="MF_00056">
    <property type="entry name" value="KDO8P_synth"/>
    <property type="match status" value="1"/>
</dbReference>
<dbReference type="InterPro" id="IPR013785">
    <property type="entry name" value="Aldolase_TIM"/>
</dbReference>
<dbReference type="InterPro" id="IPR006218">
    <property type="entry name" value="DAHP1/KDSA"/>
</dbReference>
<dbReference type="InterPro" id="IPR006269">
    <property type="entry name" value="KDO8P_synthase"/>
</dbReference>
<dbReference type="NCBIfam" id="TIGR01362">
    <property type="entry name" value="KDO8P_synth"/>
    <property type="match status" value="1"/>
</dbReference>
<dbReference type="NCBIfam" id="NF003543">
    <property type="entry name" value="PRK05198.1"/>
    <property type="match status" value="1"/>
</dbReference>
<dbReference type="NCBIfam" id="NF009109">
    <property type="entry name" value="PRK12457.1"/>
    <property type="match status" value="1"/>
</dbReference>
<dbReference type="PANTHER" id="PTHR21057">
    <property type="entry name" value="PHOSPHO-2-DEHYDRO-3-DEOXYHEPTONATE ALDOLASE"/>
    <property type="match status" value="1"/>
</dbReference>
<dbReference type="Pfam" id="PF00793">
    <property type="entry name" value="DAHP_synth_1"/>
    <property type="match status" value="1"/>
</dbReference>
<dbReference type="SUPFAM" id="SSF51569">
    <property type="entry name" value="Aldolase"/>
    <property type="match status" value="1"/>
</dbReference>
<gene>
    <name evidence="1" type="primary">kdsA</name>
    <name type="ordered locus">ECIAI39_1551</name>
</gene>
<sequence length="284" mass="30833">MKQKVVSIGDINVANDLPFVLFGGMNVLESRDLAMRICEHYVTVTQKLGIPYVFKASFDKANRSSIHSYRGPGLEEGMKIFQELKQTFGVKIITDVHEPSQAQPVADVVDVIQLPAFLARQTDLVEAMAKTGAVINVKKPQFVSPGQMGNIVDKFKEGGNEKVILCDRGANFGYDNLVVDMLGFSIMKKVSGNSPVIFDVTHALQCRDPFGAASGGRRAQVAELARAGMAVGLAGLFIEAHPDPEHAKCDGPSALPLAKLEPFLKQMKAIDDLVKGFEELDTSK</sequence>
<comment type="catalytic activity">
    <reaction evidence="1">
        <text>D-arabinose 5-phosphate + phosphoenolpyruvate + H2O = 3-deoxy-alpha-D-manno-2-octulosonate-8-phosphate + phosphate</text>
        <dbReference type="Rhea" id="RHEA:14053"/>
        <dbReference type="ChEBI" id="CHEBI:15377"/>
        <dbReference type="ChEBI" id="CHEBI:43474"/>
        <dbReference type="ChEBI" id="CHEBI:57693"/>
        <dbReference type="ChEBI" id="CHEBI:58702"/>
        <dbReference type="ChEBI" id="CHEBI:85985"/>
        <dbReference type="EC" id="2.5.1.55"/>
    </reaction>
</comment>
<comment type="pathway">
    <text evidence="1">Carbohydrate biosynthesis; 3-deoxy-D-manno-octulosonate biosynthesis; 3-deoxy-D-manno-octulosonate from D-ribulose 5-phosphate: step 2/3.</text>
</comment>
<comment type="pathway">
    <text evidence="1">Bacterial outer membrane biogenesis; lipopolysaccharide biosynthesis.</text>
</comment>
<comment type="subcellular location">
    <subcellularLocation>
        <location evidence="1">Cytoplasm</location>
    </subcellularLocation>
</comment>
<comment type="similarity">
    <text evidence="1">Belongs to the KdsA family.</text>
</comment>
<proteinExistence type="inferred from homology"/>
<protein>
    <recommendedName>
        <fullName evidence="1">2-dehydro-3-deoxyphosphooctonate aldolase</fullName>
        <ecNumber evidence="1">2.5.1.55</ecNumber>
    </recommendedName>
    <alternativeName>
        <fullName evidence="1">3-deoxy-D-manno-octulosonic acid 8-phosphate synthase</fullName>
    </alternativeName>
    <alternativeName>
        <fullName evidence="1">KDO-8-phosphate synthase</fullName>
        <shortName evidence="1">KDO 8-P synthase</shortName>
        <shortName evidence="1">KDOPS</shortName>
    </alternativeName>
    <alternativeName>
        <fullName evidence="1">Phospho-2-dehydro-3-deoxyoctonate aldolase</fullName>
    </alternativeName>
</protein>
<feature type="chain" id="PRO_1000116877" description="2-dehydro-3-deoxyphosphooctonate aldolase">
    <location>
        <begin position="1"/>
        <end position="284"/>
    </location>
</feature>
<accession>B7NUY1</accession>
<name>KDSA_ECO7I</name>
<organism>
    <name type="scientific">Escherichia coli O7:K1 (strain IAI39 / ExPEC)</name>
    <dbReference type="NCBI Taxonomy" id="585057"/>
    <lineage>
        <taxon>Bacteria</taxon>
        <taxon>Pseudomonadati</taxon>
        <taxon>Pseudomonadota</taxon>
        <taxon>Gammaproteobacteria</taxon>
        <taxon>Enterobacterales</taxon>
        <taxon>Enterobacteriaceae</taxon>
        <taxon>Escherichia</taxon>
    </lineage>
</organism>
<evidence type="ECO:0000255" key="1">
    <source>
        <dbReference type="HAMAP-Rule" id="MF_00056"/>
    </source>
</evidence>
<keyword id="KW-0963">Cytoplasm</keyword>
<keyword id="KW-0448">Lipopolysaccharide biosynthesis</keyword>
<keyword id="KW-0808">Transferase</keyword>
<reference key="1">
    <citation type="journal article" date="2009" name="PLoS Genet.">
        <title>Organised genome dynamics in the Escherichia coli species results in highly diverse adaptive paths.</title>
        <authorList>
            <person name="Touchon M."/>
            <person name="Hoede C."/>
            <person name="Tenaillon O."/>
            <person name="Barbe V."/>
            <person name="Baeriswyl S."/>
            <person name="Bidet P."/>
            <person name="Bingen E."/>
            <person name="Bonacorsi S."/>
            <person name="Bouchier C."/>
            <person name="Bouvet O."/>
            <person name="Calteau A."/>
            <person name="Chiapello H."/>
            <person name="Clermont O."/>
            <person name="Cruveiller S."/>
            <person name="Danchin A."/>
            <person name="Diard M."/>
            <person name="Dossat C."/>
            <person name="Karoui M.E."/>
            <person name="Frapy E."/>
            <person name="Garry L."/>
            <person name="Ghigo J.M."/>
            <person name="Gilles A.M."/>
            <person name="Johnson J."/>
            <person name="Le Bouguenec C."/>
            <person name="Lescat M."/>
            <person name="Mangenot S."/>
            <person name="Martinez-Jehanne V."/>
            <person name="Matic I."/>
            <person name="Nassif X."/>
            <person name="Oztas S."/>
            <person name="Petit M.A."/>
            <person name="Pichon C."/>
            <person name="Rouy Z."/>
            <person name="Ruf C.S."/>
            <person name="Schneider D."/>
            <person name="Tourret J."/>
            <person name="Vacherie B."/>
            <person name="Vallenet D."/>
            <person name="Medigue C."/>
            <person name="Rocha E.P.C."/>
            <person name="Denamur E."/>
        </authorList>
    </citation>
    <scope>NUCLEOTIDE SEQUENCE [LARGE SCALE GENOMIC DNA]</scope>
    <source>
        <strain>IAI39 / ExPEC</strain>
    </source>
</reference>